<keyword id="KW-0217">Developmental protein</keyword>
<keyword id="KW-0238">DNA-binding</keyword>
<keyword id="KW-0539">Nucleus</keyword>
<keyword id="KW-0597">Phosphoprotein</keyword>
<keyword id="KW-1185">Reference proteome</keyword>
<keyword id="KW-0804">Transcription</keyword>
<keyword id="KW-0805">Transcription regulation</keyword>
<sequence>MREPALAASAMAYHPFHAPRPADFPMSAFLAAAQPSFFPALALPPGALGKPLPDPGLAGAAAAAAAAAAAAEAGLHVSALGPHPPAAHLRSLKSLEPEDEVEDDPKVTLEAKELWDQFHKLGTEMVITKSGRRMFPPFKVRVSGLDKKAKYILLMDIVAADDCRYKFHNSRWMVAGKADPEMPKRMYIHPDSPATGEQWMAKPVAFHKLKLTNNISDKHGFTILNSMHKYQPRFHIVRANDILKLPYSTFRTYVFPETDFIAVTAYQNDKITQLKIDNNPFAKGFRDTGNGRREKRKQLTLPTLRLYEEHCKPERDGAESDASSCDPPPAREPPPSPSAAPSPLRLHRARAEEKPGAADSDPEPERTGEERSAAPLGRSPSRDASPARLTEPERSRERRSPERCSKEPTEGGGDGPFSLRSLEKERPEARRKDEGRKDVGEGKEPSLAPLVVQTDSASPLGAGHLPGLAFSSHLHGQQFFGPLGAGQPLFLHPGQFAMGPGAFSAMGMGHLLASVAGGSGSSGGAGPGTAAGLDAGGLGPAASAASTAAPFPFHLSQHMLASQGIPMPTFGGLFPYPYTYMAAAAAAASALPATSAAAAAAAAAGSLSRSPFLGSARPRLRFSPYQIPVTIPPSTSLLTTGLAAEGSKGGNSREPSPLPELALRKVGGPSRGALSPSGSAKEAASELQSIQRLVSGLESQRALSPGRESPK</sequence>
<organism>
    <name type="scientific">Mus musculus</name>
    <name type="common">Mouse</name>
    <dbReference type="NCBI Taxonomy" id="10090"/>
    <lineage>
        <taxon>Eukaryota</taxon>
        <taxon>Metazoa</taxon>
        <taxon>Chordata</taxon>
        <taxon>Craniata</taxon>
        <taxon>Vertebrata</taxon>
        <taxon>Euteleostomi</taxon>
        <taxon>Mammalia</taxon>
        <taxon>Eutheria</taxon>
        <taxon>Euarchontoglires</taxon>
        <taxon>Glires</taxon>
        <taxon>Rodentia</taxon>
        <taxon>Myomorpha</taxon>
        <taxon>Muroidea</taxon>
        <taxon>Muridae</taxon>
        <taxon>Murinae</taxon>
        <taxon>Mus</taxon>
        <taxon>Mus</taxon>
    </lineage>
</organism>
<protein>
    <recommendedName>
        <fullName>T-box transcription factor TBX2</fullName>
        <shortName>T-box protein 2</shortName>
    </recommendedName>
</protein>
<comment type="function">
    <text evidence="2 5 6 7 8 9 10 11 12 13 14 15 16 17 20">Transcription factor which acts as a transcriptional repressor (PubMed:11867218, PubMed:12023302, PubMed:18025091, PubMed:22186728). May also function as a transcriptional activator (PubMed:11867218, PubMed:22186728, PubMed:26486273). Binds to the palindromic T site 5'-TTCACACCTAGGTGTGAA-3' DNA sequence, or a half-site, which are present in the regulatory region of several genes (PubMed:12023302, PubMed:26971330, PubMed:27720610, PubMed:33731112, PubMed:9710594). Required for cardiac atrioventricular canal formation (PubMed:15459098). May cooperate with NKX2.5 to negatively modulate expression of NPPA/ANF in the atrioventricular canal (PubMed:12023302). May play a role as a positive regulator of TGFB2 expression, perhaps acting in concert with GATA4 in the developing outflow tract myocardium (PubMed:22186728). Plays a role in limb pattern formation (PubMed:15459098). Acts as a transcriptional repressor of ADAM10 gene expression, perhaps in concert with histone deacetylase HDAC1 as cofactor (PubMed:30599067). Involved in branching morphogenesis in both developing lungs and adult mammary glands, via negative modulation of target genes; acting redundantly with TBX3 (PubMed:16222716, PubMed:27720610). Required, together with TBX3, to maintain cell proliferation in the embryonic lung mesenchyme; perhaps acting downstream of SHH, BMP and TGFbeta signaling (PubMed:27720610). Involved in modulating early inner ear development, acting independently of, and also redundantly with TBX3, in different subregions of the developing ear (PubMed:33795231). Acts as a negative regulator of PML function in cellular senescence (By similarity). Acts as a negative regulator of expression of CDKN1A/p21, IL33 and CCN4; repression of CDKN1A is enhanced in response to UV-induced stress, perhaps as a result of phosphorylation by p38 MAPK (PubMed:18025091, PubMed:33731112). Negatively modulates expression of CDKN2A/p19ARF and CDH1/E-cadherin (By similarity). Plays a role in induction of the epithelial-mesenchymal transition (EMT) (By similarity). Plays a role in melanocyte proliferation, perhaps via regulation of cyclin CCND1 (PubMed:26486273). Involved in melanogenesis, acting via negative modulation of expression of DHICA oxidase/TYRP1 and P protein/OCA2 (PubMed:26971330, PubMed:9710594). Involved in regulating retinal pigment epithelium (RPE) cell proliferation, perhaps via negatively modulating transcription of the transcription factor CEBPD (PubMed:28910203).</text>
</comment>
<comment type="subunit">
    <text evidence="2 16">Binds DNA as a monomer (By similarity). Interacts with CHD4, HDAC1 and HDAC2, perhaps as components of a NuRD-like complex (PubMed:33731112). Interacts with CBX3, HMGB2 and PBX1 (PubMed:33731112). Interacts with PML (By similarity).</text>
</comment>
<comment type="subcellular location">
    <subcellularLocation>
        <location evidence="11 16">Nucleus</location>
    </subcellularLocation>
</comment>
<comment type="tissue specificity">
    <text>In adults, highest levels in lung. Also found in heart, kidney, and ovary.</text>
</comment>
<comment type="developmental stage">
    <text evidence="7 8 11 14 16 17 18 19">Expressed in the otic placode at 8.5 dpc (at protein level) (PubMed:33795231). Between 10.5-12.0 dpc, expressed in various regions of the developing ear, including the cochlear duct, endolymphatic duct and the vestibule, but not in the region which gives rise to the posterior and anterior semicircular canals (at protein level) (PubMed:33795231). Expressed at 8.5 dpc in the cardiac crescent, the atrium and the inflow tract (IFT) (PubMed:15459098). Expressed at 9.5 dpc in the otic and optic vesicles, facial region, septum transversum, bilateral nephrogenic mesodermal cords, ventral body wall mesoderm caudal to the forelimbs, pharyngeal arch mesenchyme that contains neural crest cells, including those migrating into the outflow tract (OFT), septum OFT, inner curvature, atrioventricular canal (AVC) and IFT of the heart (PubMed:15459098, PubMed:33795231, PubMed:7920656, PubMed:8853987). Expressed in a continuous stripe of mesenchyme in the ventro-lateral body wall between the fore and hind limb buds at day 10.5-11.5 dpc (PubMed:16222716). At 12.5 dpc, expressed in the trigeminal ganglia, facial regions, retina and limb bud mesenchyme (PubMed:8853987). In later stages, found in ear pinnae, the milk line, lung mesenchyme, body wall, genital ridge and developing nervous system (PubMed:33731112, PubMed:8853987). Expressed in proliferating retinal pigment epithelium (RPE) cells at 14.5 dpc, and continues after birth, but diminishes by postnatal day 90 (PubMed:28910203). Expressed in melanocytes of postnatal day 3 hair follicles (PubMed:26486273).</text>
</comment>
<comment type="domain">
    <text evidence="2">Repression domain 1 (RD1) is involved in transcriptional repression (By similarity). RD1 is necessary for its interaction with PML (By similarity).</text>
</comment>
<comment type="PTM">
    <text evidence="9">Phosphorylated (PubMed:18025091). May be phosphorylated by p38 MAPK in response to UV irradiation stress (PubMed:18025091).</text>
</comment>
<comment type="disruption phenotype">
    <text evidence="7 13 16 17">Knockouts do not survive beyond embryonic 14.5 dpc (PubMed:15459098). Abnormal atrioventricular morphology at 9.5-10.5 dpc and outflow tract (OFT) septation defects in those surviving to 12.5 dpc (PubMed:15459098). Hindlimb digit duplication at 14.5 dpc (PubMed:15459098). Increased expression of CDKN1A, FRZB, IL33, SHISA3, and CCN4/WISP1 in lung mesenchyme between 12.5-14.5 dpc (PubMed:33731112). Conditional knockdown targeted mainly to lung mesenchyme causes lung hypoplasia at 18.5 dpc (PubMed:27720610). Conditional knockdown targeted mainly to the otic epithelium disrupts inner ear morphogenesis, which is exacerbated by simultaneous conditional knockdown of TBX3 (PubMed:33795231). Simultaneous conditional knockdown of TBX2 and TBX3 targeted mainly to lung mesenchyme causes severe bleeding from 10.5 dpc and embryos die shortly thereafter, perhaps as a result of knockdown in the developing heart (PubMed:27720610).</text>
</comment>
<comment type="sequence caution" evidence="21">
    <conflict type="frameshift">
        <sequence resource="EMBL-CDS" id="AAC52697"/>
    </conflict>
</comment>
<dbReference type="EMBL" id="U15566">
    <property type="protein sequence ID" value="AAC52697.1"/>
    <property type="status" value="ALT_FRAME"/>
    <property type="molecule type" value="mRNA"/>
</dbReference>
<dbReference type="EMBL" id="AF244917">
    <property type="protein sequence ID" value="AAF90050.1"/>
    <property type="molecule type" value="Genomic_DNA"/>
</dbReference>
<dbReference type="EMBL" id="AL596324">
    <property type="status" value="NOT_ANNOTATED_CDS"/>
    <property type="molecule type" value="Genomic_DNA"/>
</dbReference>
<dbReference type="EMBL" id="AL662910">
    <property type="status" value="NOT_ANNOTATED_CDS"/>
    <property type="molecule type" value="Genomic_DNA"/>
</dbReference>
<dbReference type="EMBL" id="CH466556">
    <property type="protein sequence ID" value="EDL15775.1"/>
    <property type="molecule type" value="Genomic_DNA"/>
</dbReference>
<dbReference type="EMBL" id="BC156393">
    <property type="status" value="NOT_ANNOTATED_CDS"/>
    <property type="molecule type" value="mRNA"/>
</dbReference>
<dbReference type="CCDS" id="CCDS36266.1"/>
<dbReference type="PIR" id="S46458">
    <property type="entry name" value="S46458"/>
</dbReference>
<dbReference type="RefSeq" id="NP_033350.2">
    <property type="nucleotide sequence ID" value="NM_009324.2"/>
</dbReference>
<dbReference type="SMR" id="Q60707"/>
<dbReference type="BioGRID" id="203987">
    <property type="interactions" value="15"/>
</dbReference>
<dbReference type="FunCoup" id="Q60707">
    <property type="interactions" value="588"/>
</dbReference>
<dbReference type="STRING" id="10090.ENSMUSP00000000095"/>
<dbReference type="iPTMnet" id="Q60707"/>
<dbReference type="PhosphoSitePlus" id="Q60707"/>
<dbReference type="jPOST" id="Q60707"/>
<dbReference type="PaxDb" id="10090-ENSMUSP00000000095"/>
<dbReference type="ProteomicsDB" id="263016"/>
<dbReference type="Antibodypedia" id="1779">
    <property type="antibodies" value="318 antibodies from 37 providers"/>
</dbReference>
<dbReference type="DNASU" id="21385"/>
<dbReference type="Ensembl" id="ENSMUST00000000095.7">
    <property type="protein sequence ID" value="ENSMUSP00000000095.7"/>
    <property type="gene ID" value="ENSMUSG00000000093.7"/>
</dbReference>
<dbReference type="GeneID" id="21385"/>
<dbReference type="KEGG" id="mmu:21385"/>
<dbReference type="UCSC" id="uc007ksb.1">
    <property type="organism name" value="mouse"/>
</dbReference>
<dbReference type="AGR" id="MGI:98494"/>
<dbReference type="CTD" id="6909"/>
<dbReference type="MGI" id="MGI:98494">
    <property type="gene designation" value="Tbx2"/>
</dbReference>
<dbReference type="VEuPathDB" id="HostDB:ENSMUSG00000000093"/>
<dbReference type="eggNOG" id="KOG3585">
    <property type="taxonomic scope" value="Eukaryota"/>
</dbReference>
<dbReference type="GeneTree" id="ENSGT00940000158439"/>
<dbReference type="HOGENOM" id="CLU_023038_1_0_1"/>
<dbReference type="InParanoid" id="Q60707"/>
<dbReference type="OMA" id="EQCKPER"/>
<dbReference type="OrthoDB" id="7442607at2759"/>
<dbReference type="PhylomeDB" id="Q60707"/>
<dbReference type="TreeFam" id="TF106341"/>
<dbReference type="BioGRID-ORCS" id="21385">
    <property type="hits" value="4 hits in 79 CRISPR screens"/>
</dbReference>
<dbReference type="PRO" id="PR:Q60707"/>
<dbReference type="Proteomes" id="UP000000589">
    <property type="component" value="Chromosome 11"/>
</dbReference>
<dbReference type="RNAct" id="Q60707">
    <property type="molecule type" value="protein"/>
</dbReference>
<dbReference type="Bgee" id="ENSMUSG00000000093">
    <property type="expression patterns" value="Expressed in urothelium of ureter and 215 other cell types or tissues"/>
</dbReference>
<dbReference type="GO" id="GO:0005737">
    <property type="term" value="C:cytoplasm"/>
    <property type="evidence" value="ECO:0000314"/>
    <property type="project" value="UniProtKB"/>
</dbReference>
<dbReference type="GO" id="GO:0005634">
    <property type="term" value="C:nucleus"/>
    <property type="evidence" value="ECO:0000314"/>
    <property type="project" value="UniProtKB"/>
</dbReference>
<dbReference type="GO" id="GO:0005667">
    <property type="term" value="C:transcription regulator complex"/>
    <property type="evidence" value="ECO:0000314"/>
    <property type="project" value="MGI"/>
</dbReference>
<dbReference type="GO" id="GO:0003677">
    <property type="term" value="F:DNA binding"/>
    <property type="evidence" value="ECO:0000314"/>
    <property type="project" value="MGI"/>
</dbReference>
<dbReference type="GO" id="GO:0003700">
    <property type="term" value="F:DNA-binding transcription factor activity"/>
    <property type="evidence" value="ECO:0000314"/>
    <property type="project" value="MGI"/>
</dbReference>
<dbReference type="GO" id="GO:0140297">
    <property type="term" value="F:DNA-binding transcription factor binding"/>
    <property type="evidence" value="ECO:0000353"/>
    <property type="project" value="UniProtKB"/>
</dbReference>
<dbReference type="GO" id="GO:0001227">
    <property type="term" value="F:DNA-binding transcription repressor activity, RNA polymerase II-specific"/>
    <property type="evidence" value="ECO:0007669"/>
    <property type="project" value="Ensembl"/>
</dbReference>
<dbReference type="GO" id="GO:0042826">
    <property type="term" value="F:histone deacetylase binding"/>
    <property type="evidence" value="ECO:0000353"/>
    <property type="project" value="UniProtKB"/>
</dbReference>
<dbReference type="GO" id="GO:0000978">
    <property type="term" value="F:RNA polymerase II cis-regulatory region sequence-specific DNA binding"/>
    <property type="evidence" value="ECO:0000314"/>
    <property type="project" value="UniProtKB"/>
</dbReference>
<dbReference type="GO" id="GO:0035909">
    <property type="term" value="P:aorta morphogenesis"/>
    <property type="evidence" value="ECO:0000315"/>
    <property type="project" value="BHF-UCL"/>
</dbReference>
<dbReference type="GO" id="GO:0006915">
    <property type="term" value="P:apoptotic process"/>
    <property type="evidence" value="ECO:0000315"/>
    <property type="project" value="UniProtKB"/>
</dbReference>
<dbReference type="GO" id="GO:0036302">
    <property type="term" value="P:atrioventricular canal development"/>
    <property type="evidence" value="ECO:0000315"/>
    <property type="project" value="BHF-UCL"/>
</dbReference>
<dbReference type="GO" id="GO:1905222">
    <property type="term" value="P:atrioventricular canal morphogenesis"/>
    <property type="evidence" value="ECO:0000316"/>
    <property type="project" value="BHF-UCL"/>
</dbReference>
<dbReference type="GO" id="GO:1905072">
    <property type="term" value="P:cardiac jelly development"/>
    <property type="evidence" value="ECO:0007669"/>
    <property type="project" value="Ensembl"/>
</dbReference>
<dbReference type="GO" id="GO:0060379">
    <property type="term" value="P:cardiac muscle cell myoblast differentiation"/>
    <property type="evidence" value="ECO:0000314"/>
    <property type="project" value="BHF-UCL"/>
</dbReference>
<dbReference type="GO" id="GO:0048738">
    <property type="term" value="P:cardiac muscle tissue development"/>
    <property type="evidence" value="ECO:0000315"/>
    <property type="project" value="MGI"/>
</dbReference>
<dbReference type="GO" id="GO:0071549">
    <property type="term" value="P:cellular response to dexamethasone stimulus"/>
    <property type="evidence" value="ECO:0007669"/>
    <property type="project" value="Ensembl"/>
</dbReference>
<dbReference type="GO" id="GO:0090398">
    <property type="term" value="P:cellular senescence"/>
    <property type="evidence" value="ECO:0000314"/>
    <property type="project" value="MGI"/>
</dbReference>
<dbReference type="GO" id="GO:0090103">
    <property type="term" value="P:cochlea morphogenesis"/>
    <property type="evidence" value="ECO:0000315"/>
    <property type="project" value="UniProtKB"/>
</dbReference>
<dbReference type="GO" id="GO:0060560">
    <property type="term" value="P:developmental growth involved in morphogenesis"/>
    <property type="evidence" value="ECO:0000315"/>
    <property type="project" value="MGI"/>
</dbReference>
<dbReference type="GO" id="GO:0048596">
    <property type="term" value="P:embryonic camera-type eye morphogenesis"/>
    <property type="evidence" value="ECO:0000315"/>
    <property type="project" value="BHF-UCL"/>
</dbReference>
<dbReference type="GO" id="GO:0042733">
    <property type="term" value="P:embryonic digit morphogenesis"/>
    <property type="evidence" value="ECO:0000315"/>
    <property type="project" value="BHF-UCL"/>
</dbReference>
<dbReference type="GO" id="GO:0035050">
    <property type="term" value="P:embryonic heart tube development"/>
    <property type="evidence" value="ECO:0000250"/>
    <property type="project" value="UniProtKB"/>
</dbReference>
<dbReference type="GO" id="GO:0003272">
    <property type="term" value="P:endocardial cushion formation"/>
    <property type="evidence" value="ECO:0007669"/>
    <property type="project" value="Ensembl"/>
</dbReference>
<dbReference type="GO" id="GO:0003203">
    <property type="term" value="P:endocardial cushion morphogenesis"/>
    <property type="evidence" value="ECO:0000315"/>
    <property type="project" value="BHF-UCL"/>
</dbReference>
<dbReference type="GO" id="GO:0060441">
    <property type="term" value="P:epithelial tube branching involved in lung morphogenesis"/>
    <property type="evidence" value="ECO:0000316"/>
    <property type="project" value="UniProtKB"/>
</dbReference>
<dbReference type="GO" id="GO:0008543">
    <property type="term" value="P:fibroblast growth factor receptor signaling pathway"/>
    <property type="evidence" value="ECO:0000315"/>
    <property type="project" value="UniProtKB"/>
</dbReference>
<dbReference type="GO" id="GO:0001947">
    <property type="term" value="P:heart looping"/>
    <property type="evidence" value="ECO:0000250"/>
    <property type="project" value="UniProtKB"/>
</dbReference>
<dbReference type="GO" id="GO:0003007">
    <property type="term" value="P:heart morphogenesis"/>
    <property type="evidence" value="ECO:0000315"/>
    <property type="project" value="MGI"/>
</dbReference>
<dbReference type="GO" id="GO:0060596">
    <property type="term" value="P:mammary placode formation"/>
    <property type="evidence" value="ECO:0000316"/>
    <property type="project" value="MGI"/>
</dbReference>
<dbReference type="GO" id="GO:0097325">
    <property type="term" value="P:melanocyte proliferation"/>
    <property type="evidence" value="ECO:0000315"/>
    <property type="project" value="UniProtKB"/>
</dbReference>
<dbReference type="GO" id="GO:0060916">
    <property type="term" value="P:mesenchymal cell proliferation involved in lung development"/>
    <property type="evidence" value="ECO:0000315"/>
    <property type="project" value="UniProtKB"/>
</dbReference>
<dbReference type="GO" id="GO:0007521">
    <property type="term" value="P:muscle cell fate determination"/>
    <property type="evidence" value="ECO:0000315"/>
    <property type="project" value="MGI"/>
</dbReference>
<dbReference type="GO" id="GO:1901211">
    <property type="term" value="P:negative regulation of cardiac chamber formation"/>
    <property type="evidence" value="ECO:0000315"/>
    <property type="project" value="BHF-UCL"/>
</dbReference>
<dbReference type="GO" id="GO:2000773">
    <property type="term" value="P:negative regulation of cellular senescence"/>
    <property type="evidence" value="ECO:0007669"/>
    <property type="project" value="Ensembl"/>
</dbReference>
<dbReference type="GO" id="GO:0045892">
    <property type="term" value="P:negative regulation of DNA-templated transcription"/>
    <property type="evidence" value="ECO:0000314"/>
    <property type="project" value="MGI"/>
</dbReference>
<dbReference type="GO" id="GO:1901208">
    <property type="term" value="P:negative regulation of heart looping"/>
    <property type="evidence" value="ECO:0000315"/>
    <property type="project" value="BHF-UCL"/>
</dbReference>
<dbReference type="GO" id="GO:0000122">
    <property type="term" value="P:negative regulation of transcription by RNA polymerase II"/>
    <property type="evidence" value="ECO:0000314"/>
    <property type="project" value="UniProtKB"/>
</dbReference>
<dbReference type="GO" id="GO:0022008">
    <property type="term" value="P:neurogenesis"/>
    <property type="evidence" value="ECO:0000315"/>
    <property type="project" value="UniProtKB"/>
</dbReference>
<dbReference type="GO" id="GO:0007219">
    <property type="term" value="P:Notch signaling pathway"/>
    <property type="evidence" value="ECO:0000314"/>
    <property type="project" value="MGI"/>
</dbReference>
<dbReference type="GO" id="GO:0003151">
    <property type="term" value="P:outflow tract morphogenesis"/>
    <property type="evidence" value="ECO:0000315"/>
    <property type="project" value="UniProtKB"/>
</dbReference>
<dbReference type="GO" id="GO:0003148">
    <property type="term" value="P:outflow tract septum morphogenesis"/>
    <property type="evidence" value="ECO:0000315"/>
    <property type="project" value="BHF-UCL"/>
</dbReference>
<dbReference type="GO" id="GO:0060037">
    <property type="term" value="P:pharyngeal system development"/>
    <property type="evidence" value="ECO:0000315"/>
    <property type="project" value="BHF-UCL"/>
</dbReference>
<dbReference type="GO" id="GO:0043474">
    <property type="term" value="P:pigment metabolic process involved in pigmentation"/>
    <property type="evidence" value="ECO:0000315"/>
    <property type="project" value="UniProtKB"/>
</dbReference>
<dbReference type="GO" id="GO:0060045">
    <property type="term" value="P:positive regulation of cardiac muscle cell proliferation"/>
    <property type="evidence" value="ECO:0000315"/>
    <property type="project" value="BHF-UCL"/>
</dbReference>
<dbReference type="GO" id="GO:1902808">
    <property type="term" value="P:positive regulation of cell cycle G1/S phase transition"/>
    <property type="evidence" value="ECO:0000315"/>
    <property type="project" value="UniProtKB"/>
</dbReference>
<dbReference type="GO" id="GO:0045944">
    <property type="term" value="P:positive regulation of transcription by RNA polymerase II"/>
    <property type="evidence" value="ECO:0000314"/>
    <property type="project" value="UniProtKB"/>
</dbReference>
<dbReference type="GO" id="GO:0008016">
    <property type="term" value="P:regulation of heart contraction"/>
    <property type="evidence" value="ECO:0000250"/>
    <property type="project" value="UniProtKB"/>
</dbReference>
<dbReference type="GO" id="GO:0006357">
    <property type="term" value="P:regulation of transcription by RNA polymerase II"/>
    <property type="evidence" value="ECO:0000314"/>
    <property type="project" value="BHF-UCL"/>
</dbReference>
<dbReference type="GO" id="GO:0032526">
    <property type="term" value="P:response to retinoic acid"/>
    <property type="evidence" value="ECO:0000314"/>
    <property type="project" value="UniProtKB"/>
</dbReference>
<dbReference type="GO" id="GO:0060021">
    <property type="term" value="P:roof of mouth development"/>
    <property type="evidence" value="ECO:0000315"/>
    <property type="project" value="MGI"/>
</dbReference>
<dbReference type="GO" id="GO:0051145">
    <property type="term" value="P:smooth muscle cell differentiation"/>
    <property type="evidence" value="ECO:0000316"/>
    <property type="project" value="MGI"/>
</dbReference>
<dbReference type="GO" id="GO:0072105">
    <property type="term" value="P:ureteric peristalsis"/>
    <property type="evidence" value="ECO:0000316"/>
    <property type="project" value="MGI"/>
</dbReference>
<dbReference type="CDD" id="cd20188">
    <property type="entry name" value="T-box_TBX2_3-like"/>
    <property type="match status" value="1"/>
</dbReference>
<dbReference type="FunFam" id="2.60.40.820:FF:000003">
    <property type="entry name" value="T-box transcription factor TBX3"/>
    <property type="match status" value="1"/>
</dbReference>
<dbReference type="Gene3D" id="2.60.40.820">
    <property type="entry name" value="Transcription factor, T-box"/>
    <property type="match status" value="1"/>
</dbReference>
<dbReference type="InterPro" id="IPR008967">
    <property type="entry name" value="p53-like_TF_DNA-bd_sf"/>
</dbReference>
<dbReference type="InterPro" id="IPR046360">
    <property type="entry name" value="T-box_DNA-bd"/>
</dbReference>
<dbReference type="InterPro" id="IPR036960">
    <property type="entry name" value="T-box_sf"/>
</dbReference>
<dbReference type="InterPro" id="IPR022582">
    <property type="entry name" value="TBX2/3_TAD"/>
</dbReference>
<dbReference type="InterPro" id="IPR048387">
    <property type="entry name" value="TBX2_3_RD"/>
</dbReference>
<dbReference type="InterPro" id="IPR002070">
    <property type="entry name" value="TF_Brachyury"/>
</dbReference>
<dbReference type="InterPro" id="IPR001699">
    <property type="entry name" value="TF_T-box"/>
</dbReference>
<dbReference type="InterPro" id="IPR018186">
    <property type="entry name" value="TF_T-box_CS"/>
</dbReference>
<dbReference type="PANTHER" id="PTHR11267">
    <property type="entry name" value="T-BOX PROTEIN-RELATED"/>
    <property type="match status" value="1"/>
</dbReference>
<dbReference type="PANTHER" id="PTHR11267:SF82">
    <property type="entry name" value="T-BOX TRANSCRIPTION FACTOR TBX2"/>
    <property type="match status" value="1"/>
</dbReference>
<dbReference type="Pfam" id="PF00907">
    <property type="entry name" value="T-box"/>
    <property type="match status" value="1"/>
</dbReference>
<dbReference type="Pfam" id="PF20627">
    <property type="entry name" value="TBX2-3_RD"/>
    <property type="match status" value="1"/>
</dbReference>
<dbReference type="Pfam" id="PF12598">
    <property type="entry name" value="TBX2-3_TAD"/>
    <property type="match status" value="1"/>
</dbReference>
<dbReference type="PRINTS" id="PR00938">
    <property type="entry name" value="BRACHYURY"/>
</dbReference>
<dbReference type="PRINTS" id="PR00937">
    <property type="entry name" value="TBOX"/>
</dbReference>
<dbReference type="SMART" id="SM00425">
    <property type="entry name" value="TBOX"/>
    <property type="match status" value="1"/>
</dbReference>
<dbReference type="SUPFAM" id="SSF49417">
    <property type="entry name" value="p53-like transcription factors"/>
    <property type="match status" value="1"/>
</dbReference>
<dbReference type="PROSITE" id="PS01283">
    <property type="entry name" value="TBOX_1"/>
    <property type="match status" value="1"/>
</dbReference>
<dbReference type="PROSITE" id="PS01264">
    <property type="entry name" value="TBOX_2"/>
    <property type="match status" value="1"/>
</dbReference>
<dbReference type="PROSITE" id="PS50252">
    <property type="entry name" value="TBOX_3"/>
    <property type="match status" value="1"/>
</dbReference>
<evidence type="ECO:0000250" key="1"/>
<evidence type="ECO:0000250" key="2">
    <source>
        <dbReference type="UniProtKB" id="Q13207"/>
    </source>
</evidence>
<evidence type="ECO:0000255" key="3">
    <source>
        <dbReference type="PROSITE-ProRule" id="PRU00201"/>
    </source>
</evidence>
<evidence type="ECO:0000256" key="4">
    <source>
        <dbReference type="SAM" id="MobiDB-lite"/>
    </source>
</evidence>
<evidence type="ECO:0000269" key="5">
    <source>
    </source>
</evidence>
<evidence type="ECO:0000269" key="6">
    <source>
    </source>
</evidence>
<evidence type="ECO:0000269" key="7">
    <source>
    </source>
</evidence>
<evidence type="ECO:0000269" key="8">
    <source>
    </source>
</evidence>
<evidence type="ECO:0000269" key="9">
    <source>
    </source>
</evidence>
<evidence type="ECO:0000269" key="10">
    <source>
    </source>
</evidence>
<evidence type="ECO:0000269" key="11">
    <source>
    </source>
</evidence>
<evidence type="ECO:0000269" key="12">
    <source>
    </source>
</evidence>
<evidence type="ECO:0000269" key="13">
    <source>
    </source>
</evidence>
<evidence type="ECO:0000269" key="14">
    <source>
    </source>
</evidence>
<evidence type="ECO:0000269" key="15">
    <source>
    </source>
</evidence>
<evidence type="ECO:0000269" key="16">
    <source>
    </source>
</evidence>
<evidence type="ECO:0000269" key="17">
    <source>
    </source>
</evidence>
<evidence type="ECO:0000269" key="18">
    <source>
    </source>
</evidence>
<evidence type="ECO:0000269" key="19">
    <source>
    </source>
</evidence>
<evidence type="ECO:0000269" key="20">
    <source>
    </source>
</evidence>
<evidence type="ECO:0000305" key="21"/>
<evidence type="ECO:0007744" key="22">
    <source>
    </source>
</evidence>
<proteinExistence type="evidence at protein level"/>
<gene>
    <name type="primary">Tbx2</name>
</gene>
<name>TBX2_MOUSE</name>
<accession>Q60707</accession>
<accession>Q5SSP7</accession>
<feature type="chain" id="PRO_0000184427" description="T-box transcription factor TBX2">
    <location>
        <begin position="1"/>
        <end position="711"/>
    </location>
</feature>
<feature type="DNA-binding region" description="T-box" evidence="3">
    <location>
        <begin position="109"/>
        <end position="287"/>
    </location>
</feature>
<feature type="region of interest" description="Disordered" evidence="4">
    <location>
        <begin position="313"/>
        <end position="449"/>
    </location>
</feature>
<feature type="region of interest" description="Repression domain 1 (RD1)" evidence="1">
    <location>
        <begin position="518"/>
        <end position="602"/>
    </location>
</feature>
<feature type="region of interest" description="Disordered" evidence="4">
    <location>
        <begin position="640"/>
        <end position="687"/>
    </location>
</feature>
<feature type="compositionally biased region" description="Pro residues" evidence="4">
    <location>
        <begin position="326"/>
        <end position="340"/>
    </location>
</feature>
<feature type="compositionally biased region" description="Basic and acidic residues" evidence="4">
    <location>
        <begin position="363"/>
        <end position="372"/>
    </location>
</feature>
<feature type="compositionally biased region" description="Basic and acidic residues" evidence="4">
    <location>
        <begin position="390"/>
        <end position="409"/>
    </location>
</feature>
<feature type="compositionally biased region" description="Basic and acidic residues" evidence="4">
    <location>
        <begin position="421"/>
        <end position="444"/>
    </location>
</feature>
<feature type="modified residue" description="Phosphoserine" evidence="9 22">
    <location>
        <position position="336"/>
    </location>
</feature>
<feature type="modified residue" description="Phosphoserine" evidence="22">
    <location>
        <position position="342"/>
    </location>
</feature>
<feature type="modified residue" description="Phosphoserine" evidence="22">
    <location>
        <position position="360"/>
    </location>
</feature>
<feature type="modified residue" description="Phosphoserine" evidence="9">
    <location>
        <position position="623"/>
    </location>
</feature>
<feature type="modified residue" description="Phosphoserine" evidence="2">
    <location>
        <position position="652"/>
    </location>
</feature>
<feature type="modified residue" description="Phosphoserine" evidence="2">
    <location>
        <position position="656"/>
    </location>
</feature>
<feature type="modified residue" description="Phosphoserine" evidence="9">
    <location>
        <position position="675"/>
    </location>
</feature>
<feature type="mutagenesis site" description="Attenuated repression of Adam10 transcription." evidence="15">
    <original>RR</original>
    <variation>EE</variation>
    <location>
        <begin position="132"/>
        <end position="133"/>
    </location>
</feature>
<feature type="mutagenesis site" description="Abolishes phosphorylation." evidence="9">
    <original>S</original>
    <variation>A</variation>
    <location>
        <position position="336"/>
    </location>
</feature>
<feature type="mutagenesis site" description="Abolishes phosphorylation." evidence="9">
    <original>S</original>
    <variation>A</variation>
    <location>
        <position position="623"/>
    </location>
</feature>
<feature type="mutagenesis site" description="Abolishes phosphorylation." evidence="9">
    <original>S</original>
    <variation>A</variation>
    <location>
        <position position="675"/>
    </location>
</feature>
<feature type="sequence conflict" description="In Ref. 1; AAC52697 and 2; AAF90050." evidence="21" ref="1 2">
    <original>G</original>
    <variation>C</variation>
    <location>
        <position position="377"/>
    </location>
</feature>
<feature type="sequence conflict" description="In Ref. 1; AAC52697 and 2; AAF90050." evidence="21" ref="1 2">
    <original>G</original>
    <variation>C</variation>
    <location>
        <position position="486"/>
    </location>
</feature>
<feature type="sequence conflict" description="In Ref. 1; AAC52697 and 2; AAF90050." evidence="21" ref="1 2">
    <original>S</original>
    <variation>R</variation>
    <location>
        <position position="689"/>
    </location>
</feature>
<reference key="1">
    <citation type="journal article" date="1994" name="Nat. Genet.">
        <title>An ancient family of embryonically expressed mouse genes sharing a conserved protein motif with the T locus.</title>
        <authorList>
            <person name="Bollag R.J."/>
            <person name="Siegfried Z."/>
            <person name="Cebra-Thomas J.A."/>
            <person name="Garvey N."/>
            <person name="Davison E.M."/>
            <person name="Silver L.M."/>
        </authorList>
    </citation>
    <scope>NUCLEOTIDE SEQUENCE [MRNA]</scope>
    <scope>DEVELOPMENTAL STAGE</scope>
    <source>
        <tissue>Embryo</tissue>
    </source>
</reference>
<reference key="2">
    <citation type="journal article" date="2000" name="J. Biol. Chem.">
        <title>The gene encoding the T-box Factor Tbx2 is a target for the microphthalmia-associated transcription factor in melanocytes.</title>
        <authorList>
            <person name="Carreira S."/>
            <person name="Liu B."/>
            <person name="Goding C.R."/>
        </authorList>
    </citation>
    <scope>NUCLEOTIDE SEQUENCE [GENOMIC DNA]</scope>
</reference>
<reference key="3">
    <citation type="journal article" date="2009" name="PLoS Biol.">
        <title>Lineage-specific biology revealed by a finished genome assembly of the mouse.</title>
        <authorList>
            <person name="Church D.M."/>
            <person name="Goodstadt L."/>
            <person name="Hillier L.W."/>
            <person name="Zody M.C."/>
            <person name="Goldstein S."/>
            <person name="She X."/>
            <person name="Bult C.J."/>
            <person name="Agarwala R."/>
            <person name="Cherry J.L."/>
            <person name="DiCuccio M."/>
            <person name="Hlavina W."/>
            <person name="Kapustin Y."/>
            <person name="Meric P."/>
            <person name="Maglott D."/>
            <person name="Birtle Z."/>
            <person name="Marques A.C."/>
            <person name="Graves T."/>
            <person name="Zhou S."/>
            <person name="Teague B."/>
            <person name="Potamousis K."/>
            <person name="Churas C."/>
            <person name="Place M."/>
            <person name="Herschleb J."/>
            <person name="Runnheim R."/>
            <person name="Forrest D."/>
            <person name="Amos-Landgraf J."/>
            <person name="Schwartz D.C."/>
            <person name="Cheng Z."/>
            <person name="Lindblad-Toh K."/>
            <person name="Eichler E.E."/>
            <person name="Ponting C.P."/>
        </authorList>
    </citation>
    <scope>NUCLEOTIDE SEQUENCE [LARGE SCALE GENOMIC DNA]</scope>
    <source>
        <strain>C57BL/6J</strain>
    </source>
</reference>
<reference key="4">
    <citation type="submission" date="2005-07" db="EMBL/GenBank/DDBJ databases">
        <authorList>
            <person name="Mural R.J."/>
            <person name="Adams M.D."/>
            <person name="Myers E.W."/>
            <person name="Smith H.O."/>
            <person name="Venter J.C."/>
        </authorList>
    </citation>
    <scope>NUCLEOTIDE SEQUENCE [LARGE SCALE GENOMIC DNA]</scope>
</reference>
<reference key="5">
    <citation type="journal article" date="2004" name="Genome Res.">
        <title>The status, quality, and expansion of the NIH full-length cDNA project: the Mammalian Gene Collection (MGC).</title>
        <authorList>
            <consortium name="The MGC Project Team"/>
        </authorList>
    </citation>
    <scope>NUCLEOTIDE SEQUENCE [LARGE SCALE MRNA]</scope>
</reference>
<reference key="6">
    <citation type="journal article" date="1996" name="Dev. Dyn.">
        <title>Expression of the T-box family genes, Tbx1-Tbx5, during early mouse development.</title>
        <authorList>
            <person name="Chapman D.L."/>
            <person name="Garvey N."/>
            <person name="Hancock S."/>
            <person name="Alexiou M."/>
            <person name="Agulnik S.I."/>
            <person name="Gibson-Brown J.J."/>
            <person name="Cebra-Thomas J."/>
            <person name="Bollag R.J."/>
            <person name="Silver L.M."/>
            <person name="Papaioannou V.E."/>
        </authorList>
    </citation>
    <scope>DEVELOPMENTAL STAGE</scope>
</reference>
<reference key="7">
    <citation type="journal article" date="1998" name="Mol. Cell. Biol.">
        <title>Brachyury-related transcription factor Tbx2 and repression of the melanocyte-specific TRP-1 promoter.</title>
        <authorList>
            <person name="Carreira S."/>
            <person name="Dexter T.J."/>
            <person name="Yavuzer U."/>
            <person name="Easty D.J."/>
            <person name="Goding C.R."/>
        </authorList>
    </citation>
    <scope>FUNCTION</scope>
</reference>
<reference key="8">
    <citation type="journal article" date="2002" name="Gene">
        <title>Murine Tbx2 contains domains that activate and repress gene transcription.</title>
        <authorList>
            <person name="Paxton C."/>
            <person name="Zhao H."/>
            <person name="Chin Y."/>
            <person name="Langner K."/>
            <person name="Reecy J."/>
        </authorList>
    </citation>
    <scope>FUNCTION</scope>
</reference>
<reference key="9">
    <citation type="journal article" date="2002" name="Genes Dev.">
        <title>Cooperative action of Tbx2 and Nkx2.5 inhibits ANF expression in the atrioventricular canal: implications for cardiac chamber formation.</title>
        <authorList>
            <person name="Habets P.E."/>
            <person name="Moorman A.F."/>
            <person name="Clout D.E."/>
            <person name="van Roon M.A."/>
            <person name="Lingbeek M."/>
            <person name="van Lohuizen M."/>
            <person name="Campione M."/>
            <person name="Christoffels V.M."/>
        </authorList>
    </citation>
    <scope>FUNCTION</scope>
</reference>
<reference key="10">
    <citation type="journal article" date="2004" name="Development">
        <title>Tbx2 is essential for patterning the atrioventricular canal and for morphogenesis of the outflow tract during heart development.</title>
        <authorList>
            <person name="Harrelson Z."/>
            <person name="Kelly R.G."/>
            <person name="Goldin S.N."/>
            <person name="Gibson-Brown J.J."/>
            <person name="Bollag R.J."/>
            <person name="Silver L.M."/>
            <person name="Papaioannou V.E."/>
        </authorList>
    </citation>
    <scope>FUNCTION</scope>
    <scope>DEVELOPMENTAL STAGE</scope>
    <scope>DISRUPTION PHENOTYPE</scope>
</reference>
<reference key="11">
    <citation type="journal article" date="2005" name="Dev. Dyn.">
        <title>Tbx3, the ulnar-mammary syndrome gene, and Tbx2 interact in mammary gland development through a p19Arf/p53-independent pathway.</title>
        <authorList>
            <person name="Jerome-Majewska L.A."/>
            <person name="Jenkins G.P."/>
            <person name="Ernstoff E."/>
            <person name="Zindy F."/>
            <person name="Sherr C.J."/>
            <person name="Papaioannou V.E."/>
        </authorList>
    </citation>
    <scope>FUNCTION</scope>
    <scope>DEVELOPMENTAL STAGE</scope>
</reference>
<reference key="12">
    <citation type="journal article" date="2008" name="J. Biol. Chem.">
        <title>UV-mediated regulation of the anti-senescence factor Tbx2.</title>
        <authorList>
            <person name="Abrahams A."/>
            <person name="Mowla S."/>
            <person name="Parker M.I."/>
            <person name="Goding C.R."/>
            <person name="Prince S."/>
        </authorList>
    </citation>
    <scope>FUNCTION</scope>
    <scope>MUTAGENESIS OF SER-336; SER-623 AND SER-675</scope>
    <scope>PHOSPHORYLATION AT SER-336; SER-623 AND SER-675</scope>
</reference>
<reference key="13">
    <citation type="journal article" date="2012" name="Development">
        <title>Ectopic retinoic acid signaling affects outflow tract cushion development through suppression of the myocardial Tbx2-Tgfbeta2 pathway.</title>
        <authorList>
            <person name="Sakabe M."/>
            <person name="Kokubo H."/>
            <person name="Nakajima Y."/>
            <person name="Saga Y."/>
        </authorList>
    </citation>
    <scope>FUNCTION</scope>
</reference>
<reference key="14">
    <citation type="journal article" date="2015" name="Cell Prolif.">
        <title>Microphthalmia-associated transcription factor/T-box factor-2 axis acts through Cyclin D1 to regulate melanocyte proliferation.</title>
        <authorList>
            <person name="Pan L."/>
            <person name="Ma X."/>
            <person name="Wen B."/>
            <person name="Su Z."/>
            <person name="Zheng X."/>
            <person name="Liu Y."/>
            <person name="Li H."/>
            <person name="Chen Y."/>
            <person name="Wang J."/>
            <person name="Lu F."/>
            <person name="Qu J."/>
            <person name="Hou L."/>
        </authorList>
    </citation>
    <scope>FUNCTION</scope>
    <scope>DEVELOPMENTAL STAGE</scope>
</reference>
<reference key="15">
    <citation type="journal article" date="2016" name="Dev. Cell">
        <title>Tbx2 and Tbx3 Act Downstream of Shh to Maintain Canonical Wnt Signaling during Branching Morphogenesis of the Murine Lung.</title>
        <authorList>
            <person name="Luedtke T.H."/>
            <person name="Rudat C."/>
            <person name="Wojahn I."/>
            <person name="Weiss A.C."/>
            <person name="Kleppa M.J."/>
            <person name="Kurz J."/>
            <person name="Farin H.F."/>
            <person name="Moon A."/>
            <person name="Christoffels V.M."/>
            <person name="Kispert A."/>
        </authorList>
    </citation>
    <scope>FUNCTION</scope>
    <scope>DISRUPTION PHENOTYPE</scope>
</reference>
<reference key="16">
    <citation type="journal article" date="2016" name="Mol. Cell. Biochem.">
        <title>The transcription factor TBX2 regulates melanogenesis in melanocytes by repressing Oca2.</title>
        <authorList>
            <person name="Chen Y."/>
            <person name="Pan L."/>
            <person name="Su Z."/>
            <person name="Wang J."/>
            <person name="Li H."/>
            <person name="Ma X."/>
            <person name="Liu Y."/>
            <person name="Lu F."/>
            <person name="Qu J."/>
            <person name="Hou L."/>
        </authorList>
    </citation>
    <scope>FUNCTION</scope>
</reference>
<reference key="17">
    <citation type="journal article" date="2017" name="Curr. Eye Res.">
        <title>The T-Box Transcription Factor TBX2 Regulates Cell Proliferation in the Retinal Pigment Epithelium.</title>
        <authorList>
            <person name="Wang J."/>
            <person name="Liu Y."/>
            <person name="Su Z."/>
            <person name="Pan L."/>
            <person name="Lu F."/>
            <person name="Qu J."/>
            <person name="Hou L."/>
        </authorList>
    </citation>
    <scope>FUNCTION</scope>
    <scope>DEVELOPMENTAL STAGE</scope>
</reference>
<reference key="18">
    <citation type="journal article" date="2019" name="Cell. Mol. Life Sci.">
        <title>Transcriptional repression of the ectodomain sheddase ADAM10 by TBX2 and potential implication for Alzheimer's disease.</title>
        <authorList>
            <person name="Reinhardt S."/>
            <person name="Schuck F."/>
            <person name="Stoye N."/>
            <person name="Hartmann T."/>
            <person name="Grimm M.O.W."/>
            <person name="Pflugfelder G."/>
            <person name="Endres K."/>
        </authorList>
    </citation>
    <scope>FUNCTION</scope>
    <scope>MUTAGENESIS OF 132-ARG-ARG-133</scope>
</reference>
<reference key="19">
    <citation type="journal article" date="2021" name="Development">
        <title>Regulation of otocyst patterning by Tbx2 and Tbx3 is required for inner ear morphogenesis in the mouse.</title>
        <authorList>
            <person name="Kaiser M."/>
            <person name="Wojahn I."/>
            <person name="Rudat C."/>
            <person name="Luedtke T.H."/>
            <person name="Christoffels V.M."/>
            <person name="Moon A."/>
            <person name="Kispert A."/>
            <person name="Trowe M.O."/>
        </authorList>
    </citation>
    <scope>FUNCTION</scope>
    <scope>DEVELOPMENTAL STAGE</scope>
    <scope>DISRUPTION PHENOTYPE</scope>
</reference>
<reference key="20">
    <citation type="journal article" date="2021" name="Respir. Res.">
        <title>Combined genomic and proteomic approaches reveal DNA binding sites and interaction partners of TBX2 in the developing lung.</title>
        <authorList>
            <person name="Luedtke T.H."/>
            <person name="Wojahn I."/>
            <person name="Kleppa M.J."/>
            <person name="Schierstaedt J."/>
            <person name="Christoffels V.M."/>
            <person name="Kuenzler P."/>
            <person name="Kispert A."/>
        </authorList>
    </citation>
    <scope>FUNCTION</scope>
    <scope>INTERACTION WITH CHD4; HDAC1; HDAC2; CBX3; HMGB2 AND PBX1</scope>
    <scope>SUBCELLULAR LOCATION</scope>
    <scope>DISRUPTION PHENOTYPE</scope>
</reference>
<reference key="21">
    <citation type="journal article" date="2010" name="Cell">
        <title>A tissue-specific atlas of mouse protein phosphorylation and expression.</title>
        <authorList>
            <person name="Huttlin E.L."/>
            <person name="Jedrychowski M.P."/>
            <person name="Elias J.E."/>
            <person name="Goswami T."/>
            <person name="Rad R."/>
            <person name="Beausoleil S.A."/>
            <person name="Villen J."/>
            <person name="Haas W."/>
            <person name="Sowa M.E."/>
            <person name="Gygi S.P."/>
        </authorList>
    </citation>
    <scope>PHOSPHORYLATION [LARGE SCALE ANALYSIS] AT SER-336; SER-342 AND SER-360</scope>
    <scope>IDENTIFICATION BY MASS SPECTROMETRY [LARGE SCALE ANALYSIS]</scope>
    <source>
        <tissue>Kidney</tissue>
        <tissue>Lung</tissue>
    </source>
</reference>